<protein>
    <recommendedName>
        <fullName evidence="1">Large ribosomal subunit protein bL27</fullName>
    </recommendedName>
    <alternativeName>
        <fullName evidence="2">50S ribosomal protein L27</fullName>
    </alternativeName>
</protein>
<dbReference type="EMBL" id="AE016825">
    <property type="protein sequence ID" value="AAQ58524.1"/>
    <property type="molecule type" value="Genomic_DNA"/>
</dbReference>
<dbReference type="RefSeq" id="WP_011134404.1">
    <property type="nucleotide sequence ID" value="NC_005085.1"/>
</dbReference>
<dbReference type="SMR" id="Q7NZS2"/>
<dbReference type="STRING" id="243365.CV_0849"/>
<dbReference type="GeneID" id="66365251"/>
<dbReference type="KEGG" id="cvi:CV_0849"/>
<dbReference type="eggNOG" id="COG0211">
    <property type="taxonomic scope" value="Bacteria"/>
</dbReference>
<dbReference type="HOGENOM" id="CLU_095424_4_1_4"/>
<dbReference type="OrthoDB" id="9803474at2"/>
<dbReference type="Proteomes" id="UP000001424">
    <property type="component" value="Chromosome"/>
</dbReference>
<dbReference type="GO" id="GO:0022625">
    <property type="term" value="C:cytosolic large ribosomal subunit"/>
    <property type="evidence" value="ECO:0007669"/>
    <property type="project" value="TreeGrafter"/>
</dbReference>
<dbReference type="GO" id="GO:0003735">
    <property type="term" value="F:structural constituent of ribosome"/>
    <property type="evidence" value="ECO:0007669"/>
    <property type="project" value="InterPro"/>
</dbReference>
<dbReference type="GO" id="GO:0006412">
    <property type="term" value="P:translation"/>
    <property type="evidence" value="ECO:0007669"/>
    <property type="project" value="UniProtKB-UniRule"/>
</dbReference>
<dbReference type="FunFam" id="2.40.50.100:FF:000001">
    <property type="entry name" value="50S ribosomal protein L27"/>
    <property type="match status" value="1"/>
</dbReference>
<dbReference type="Gene3D" id="2.40.50.100">
    <property type="match status" value="1"/>
</dbReference>
<dbReference type="HAMAP" id="MF_00539">
    <property type="entry name" value="Ribosomal_bL27"/>
    <property type="match status" value="1"/>
</dbReference>
<dbReference type="InterPro" id="IPR001684">
    <property type="entry name" value="Ribosomal_bL27"/>
</dbReference>
<dbReference type="InterPro" id="IPR018261">
    <property type="entry name" value="Ribosomal_bL27_CS"/>
</dbReference>
<dbReference type="NCBIfam" id="TIGR00062">
    <property type="entry name" value="L27"/>
    <property type="match status" value="1"/>
</dbReference>
<dbReference type="PANTHER" id="PTHR15893:SF0">
    <property type="entry name" value="LARGE RIBOSOMAL SUBUNIT PROTEIN BL27M"/>
    <property type="match status" value="1"/>
</dbReference>
<dbReference type="PANTHER" id="PTHR15893">
    <property type="entry name" value="RIBOSOMAL PROTEIN L27"/>
    <property type="match status" value="1"/>
</dbReference>
<dbReference type="Pfam" id="PF01016">
    <property type="entry name" value="Ribosomal_L27"/>
    <property type="match status" value="1"/>
</dbReference>
<dbReference type="PRINTS" id="PR00063">
    <property type="entry name" value="RIBOSOMALL27"/>
</dbReference>
<dbReference type="SUPFAM" id="SSF110324">
    <property type="entry name" value="Ribosomal L27 protein-like"/>
    <property type="match status" value="1"/>
</dbReference>
<dbReference type="PROSITE" id="PS00831">
    <property type="entry name" value="RIBOSOMAL_L27"/>
    <property type="match status" value="1"/>
</dbReference>
<gene>
    <name evidence="1" type="primary">rpmA</name>
    <name type="ordered locus">CV_0849</name>
</gene>
<reference key="1">
    <citation type="journal article" date="2003" name="Proc. Natl. Acad. Sci. U.S.A.">
        <title>The complete genome sequence of Chromobacterium violaceum reveals remarkable and exploitable bacterial adaptability.</title>
        <authorList>
            <person name="Vasconcelos A.T.R."/>
            <person name="de Almeida D.F."/>
            <person name="Hungria M."/>
            <person name="Guimaraes C.T."/>
            <person name="Antonio R.V."/>
            <person name="Almeida F.C."/>
            <person name="de Almeida L.G.P."/>
            <person name="de Almeida R."/>
            <person name="Alves-Gomes J.A."/>
            <person name="Andrade E.M."/>
            <person name="Araripe J."/>
            <person name="de Araujo M.F.F."/>
            <person name="Astolfi-Filho S."/>
            <person name="Azevedo V."/>
            <person name="Baptista A.J."/>
            <person name="Bataus L.A.M."/>
            <person name="Batista J.S."/>
            <person name="Belo A."/>
            <person name="van den Berg C."/>
            <person name="Bogo M."/>
            <person name="Bonatto S."/>
            <person name="Bordignon J."/>
            <person name="Brigido M.M."/>
            <person name="Brito C.A."/>
            <person name="Brocchi M."/>
            <person name="Burity H.A."/>
            <person name="Camargo A.A."/>
            <person name="Cardoso D.D.P."/>
            <person name="Carneiro N.P."/>
            <person name="Carraro D.M."/>
            <person name="Carvalho C.M.B."/>
            <person name="Cascardo J.C.M."/>
            <person name="Cavada B.S."/>
            <person name="Chueire L.M.O."/>
            <person name="Creczynski-Pasa T.B."/>
            <person name="Cunha-Junior N.C."/>
            <person name="Fagundes N."/>
            <person name="Falcao C.L."/>
            <person name="Fantinatti F."/>
            <person name="Farias I.P."/>
            <person name="Felipe M.S.S."/>
            <person name="Ferrari L.P."/>
            <person name="Ferro J.A."/>
            <person name="Ferro M.I.T."/>
            <person name="Franco G.R."/>
            <person name="Freitas N.S.A."/>
            <person name="Furlan L.R."/>
            <person name="Gazzinelli R.T."/>
            <person name="Gomes E.A."/>
            <person name="Goncalves P.R."/>
            <person name="Grangeiro T.B."/>
            <person name="Grattapaglia D."/>
            <person name="Grisard E.C."/>
            <person name="Hanna E.S."/>
            <person name="Jardim S.N."/>
            <person name="Laurino J."/>
            <person name="Leoi L.C.T."/>
            <person name="Lima L.F.A."/>
            <person name="Loureiro M.F."/>
            <person name="Lyra M.C.C.P."/>
            <person name="Madeira H.M.F."/>
            <person name="Manfio G.P."/>
            <person name="Maranhao A.Q."/>
            <person name="Martins W.S."/>
            <person name="di Mauro S.M.Z."/>
            <person name="de Medeiros S.R.B."/>
            <person name="Meissner R.V."/>
            <person name="Moreira M.A.M."/>
            <person name="Nascimento F.F."/>
            <person name="Nicolas M.F."/>
            <person name="Oliveira J.G."/>
            <person name="Oliveira S.C."/>
            <person name="Paixao R.F.C."/>
            <person name="Parente J.A."/>
            <person name="Pedrosa F.O."/>
            <person name="Pena S.D.J."/>
            <person name="Pereira J.O."/>
            <person name="Pereira M."/>
            <person name="Pinto L.S.R.C."/>
            <person name="Pinto L.S."/>
            <person name="Porto J.I.R."/>
            <person name="Potrich D.P."/>
            <person name="Ramalho-Neto C.E."/>
            <person name="Reis A.M.M."/>
            <person name="Rigo L.U."/>
            <person name="Rondinelli E."/>
            <person name="Santos E.B.P."/>
            <person name="Santos F.R."/>
            <person name="Schneider M.P.C."/>
            <person name="Seuanez H.N."/>
            <person name="Silva A.M.R."/>
            <person name="da Silva A.L.C."/>
            <person name="Silva D.W."/>
            <person name="Silva R."/>
            <person name="Simoes I.C."/>
            <person name="Simon D."/>
            <person name="Soares C.M.A."/>
            <person name="Soares R.B.A."/>
            <person name="Souza E.M."/>
            <person name="Souza K.R.L."/>
            <person name="Souza R.C."/>
            <person name="Steffens M.B.R."/>
            <person name="Steindel M."/>
            <person name="Teixeira S.R."/>
            <person name="Urmenyi T."/>
            <person name="Vettore A."/>
            <person name="Wassem R."/>
            <person name="Zaha A."/>
            <person name="Simpson A.J.G."/>
        </authorList>
    </citation>
    <scope>NUCLEOTIDE SEQUENCE [LARGE SCALE GENOMIC DNA]</scope>
    <source>
        <strain>ATCC 12472 / DSM 30191 / JCM 1249 / CCUG 213 / NBRC 12614 / NCIMB 9131 / NCTC 9757 / MK</strain>
    </source>
</reference>
<name>RL27_CHRVO</name>
<organism>
    <name type="scientific">Chromobacterium violaceum (strain ATCC 12472 / DSM 30191 / JCM 1249 / CCUG 213 / NBRC 12614 / NCIMB 9131 / NCTC 9757 / MK)</name>
    <dbReference type="NCBI Taxonomy" id="243365"/>
    <lineage>
        <taxon>Bacteria</taxon>
        <taxon>Pseudomonadati</taxon>
        <taxon>Pseudomonadota</taxon>
        <taxon>Betaproteobacteria</taxon>
        <taxon>Neisseriales</taxon>
        <taxon>Chromobacteriaceae</taxon>
        <taxon>Chromobacterium</taxon>
    </lineage>
</organism>
<keyword id="KW-1185">Reference proteome</keyword>
<keyword id="KW-0687">Ribonucleoprotein</keyword>
<keyword id="KW-0689">Ribosomal protein</keyword>
<feature type="chain" id="PRO_0000181074" description="Large ribosomal subunit protein bL27">
    <location>
        <begin position="1"/>
        <end position="91"/>
    </location>
</feature>
<evidence type="ECO:0000255" key="1">
    <source>
        <dbReference type="HAMAP-Rule" id="MF_00539"/>
    </source>
</evidence>
<evidence type="ECO:0000305" key="2"/>
<proteinExistence type="inferred from homology"/>
<accession>Q7NZS2</accession>
<comment type="similarity">
    <text evidence="1">Belongs to the bacterial ribosomal protein bL27 family.</text>
</comment>
<sequence>MAHKKAGGSSRNGRDSEAKRLGVKVYGSELIPAGSIIVRQRGTKFHAGENVGQGKDHTLFAKVDGYVEFTVKGAQQRKTVNVVPYTGVDGE</sequence>